<protein>
    <recommendedName>
        <fullName>Ubiquitin domain-containing protein 1</fullName>
    </recommendedName>
</protein>
<proteinExistence type="evidence at transcript level"/>
<accession>Q6GL38</accession>
<organism>
    <name type="scientific">Xenopus tropicalis</name>
    <name type="common">Western clawed frog</name>
    <name type="synonym">Silurana tropicalis</name>
    <dbReference type="NCBI Taxonomy" id="8364"/>
    <lineage>
        <taxon>Eukaryota</taxon>
        <taxon>Metazoa</taxon>
        <taxon>Chordata</taxon>
        <taxon>Craniata</taxon>
        <taxon>Vertebrata</taxon>
        <taxon>Euteleostomi</taxon>
        <taxon>Amphibia</taxon>
        <taxon>Batrachia</taxon>
        <taxon>Anura</taxon>
        <taxon>Pipoidea</taxon>
        <taxon>Pipidae</taxon>
        <taxon>Xenopodinae</taxon>
        <taxon>Xenopus</taxon>
        <taxon>Silurana</taxon>
    </lineage>
</organism>
<feature type="chain" id="PRO_0000242679" description="Ubiquitin domain-containing protein 1">
    <location>
        <begin position="1"/>
        <end position="240"/>
    </location>
</feature>
<feature type="domain" description="Ubiquitin-like">
    <location>
        <begin position="153"/>
        <end position="228"/>
    </location>
</feature>
<feature type="region of interest" description="Disordered" evidence="2">
    <location>
        <begin position="1"/>
        <end position="48"/>
    </location>
</feature>
<feature type="compositionally biased region" description="Low complexity" evidence="2">
    <location>
        <begin position="12"/>
        <end position="22"/>
    </location>
</feature>
<feature type="compositionally biased region" description="Basic and acidic residues" evidence="2">
    <location>
        <begin position="28"/>
        <end position="42"/>
    </location>
</feature>
<reference key="1">
    <citation type="submission" date="2004-06" db="EMBL/GenBank/DDBJ databases">
        <authorList>
            <consortium name="NIH - Xenopus Gene Collection (XGC) project"/>
        </authorList>
    </citation>
    <scope>NUCLEOTIDE SEQUENCE [LARGE SCALE MRNA]</scope>
    <source>
        <tissue>Embryo</tissue>
    </source>
</reference>
<sequence length="240" mass="27356">MGGCVGRPQGESQRSQSRASGQQRKRAGRNEPLKKERPRWKSDYPMTDGQLRSKRDEFWDTAPAFEGRKEIWDALKAAAFAVEANDHELAQAIVDGASITLPHGSLTECYDELGTRYQLPVYCLAPPVNLIMERSEEDGTDALEPAPNTRREFQLKVRLSTGKDVKLNASMVDTIGQLKKQLHAVEGIEPCWQRWFFFWEASHRQNEAPGDEDPERLRDTSYCKPATRDTKLNWHNAQQI</sequence>
<name>UBTD1_XENTR</name>
<evidence type="ECO:0000250" key="1">
    <source>
        <dbReference type="UniProtKB" id="Q9HAC8"/>
    </source>
</evidence>
<evidence type="ECO:0000256" key="2">
    <source>
        <dbReference type="SAM" id="MobiDB-lite"/>
    </source>
</evidence>
<keyword id="KW-1185">Reference proteome</keyword>
<dbReference type="EMBL" id="BC074677">
    <property type="protein sequence ID" value="AAH74677.1"/>
    <property type="molecule type" value="mRNA"/>
</dbReference>
<dbReference type="RefSeq" id="NP_001005656.1">
    <property type="nucleotide sequence ID" value="NM_001005656.1"/>
</dbReference>
<dbReference type="SMR" id="Q6GL38"/>
<dbReference type="FunCoup" id="Q6GL38">
    <property type="interactions" value="244"/>
</dbReference>
<dbReference type="PaxDb" id="8364-ENSXETP00000031565"/>
<dbReference type="DNASU" id="448143"/>
<dbReference type="GeneID" id="448143"/>
<dbReference type="KEGG" id="xtr:448143"/>
<dbReference type="AGR" id="Xenbase:XB-GENE-993611"/>
<dbReference type="CTD" id="80019"/>
<dbReference type="Xenbase" id="XB-GENE-993611">
    <property type="gene designation" value="ubtd1"/>
</dbReference>
<dbReference type="eggNOG" id="KOG0013">
    <property type="taxonomic scope" value="Eukaryota"/>
</dbReference>
<dbReference type="InParanoid" id="Q6GL38"/>
<dbReference type="OMA" id="FWEASHR"/>
<dbReference type="OrthoDB" id="1640476at2759"/>
<dbReference type="Proteomes" id="UP000008143">
    <property type="component" value="Chromosome 7"/>
</dbReference>
<dbReference type="Gene3D" id="3.10.20.90">
    <property type="entry name" value="Phosphatidylinositol 3-kinase Catalytic Subunit, Chain A, domain 1"/>
    <property type="match status" value="1"/>
</dbReference>
<dbReference type="Gene3D" id="1.20.225.20">
    <property type="entry name" value="Ub domain-containing protein, DC-UbP/UBTD2, N-terminal domain"/>
    <property type="match status" value="1"/>
</dbReference>
<dbReference type="InterPro" id="IPR032752">
    <property type="entry name" value="DC-UbP/UBTD2_N"/>
</dbReference>
<dbReference type="InterPro" id="IPR038169">
    <property type="entry name" value="DC-UbP/UBTD2_N_sf"/>
</dbReference>
<dbReference type="InterPro" id="IPR000626">
    <property type="entry name" value="Ubiquitin-like_dom"/>
</dbReference>
<dbReference type="InterPro" id="IPR029071">
    <property type="entry name" value="Ubiquitin-like_domsf"/>
</dbReference>
<dbReference type="InterPro" id="IPR039869">
    <property type="entry name" value="UBTD1/2"/>
</dbReference>
<dbReference type="PANTHER" id="PTHR13609">
    <property type="entry name" value="UBIQUITIN DOMAIN CONTAINING 1 PROTEIN-RELATED"/>
    <property type="match status" value="1"/>
</dbReference>
<dbReference type="Pfam" id="PF16455">
    <property type="entry name" value="UBD"/>
    <property type="match status" value="1"/>
</dbReference>
<dbReference type="Pfam" id="PF00240">
    <property type="entry name" value="ubiquitin"/>
    <property type="match status" value="1"/>
</dbReference>
<dbReference type="SUPFAM" id="SSF54236">
    <property type="entry name" value="Ubiquitin-like"/>
    <property type="match status" value="1"/>
</dbReference>
<comment type="function">
    <text evidence="1">May be involved in the regulation of cellular senescence through a positive feedback loop with TP53.</text>
</comment>
<gene>
    <name type="primary">ubtd1</name>
</gene>